<dbReference type="EC" id="6.3.3.1" evidence="1"/>
<dbReference type="EMBL" id="CP000099">
    <property type="protein sequence ID" value="AAZ69836.1"/>
    <property type="molecule type" value="Genomic_DNA"/>
</dbReference>
<dbReference type="SMR" id="Q46E56"/>
<dbReference type="STRING" id="269797.Mbar_A0862"/>
<dbReference type="PaxDb" id="269797-Mbar_A0862"/>
<dbReference type="KEGG" id="mba:Mbar_A0862"/>
<dbReference type="eggNOG" id="arCOG00639">
    <property type="taxonomic scope" value="Archaea"/>
</dbReference>
<dbReference type="HOGENOM" id="CLU_047116_0_0_2"/>
<dbReference type="OrthoDB" id="6605at2157"/>
<dbReference type="UniPathway" id="UPA00074">
    <property type="reaction ID" value="UER00129"/>
</dbReference>
<dbReference type="GO" id="GO:0005829">
    <property type="term" value="C:cytosol"/>
    <property type="evidence" value="ECO:0007669"/>
    <property type="project" value="TreeGrafter"/>
</dbReference>
<dbReference type="GO" id="GO:0005524">
    <property type="term" value="F:ATP binding"/>
    <property type="evidence" value="ECO:0007669"/>
    <property type="project" value="UniProtKB-KW"/>
</dbReference>
<dbReference type="GO" id="GO:0004637">
    <property type="term" value="F:phosphoribosylamine-glycine ligase activity"/>
    <property type="evidence" value="ECO:0007669"/>
    <property type="project" value="TreeGrafter"/>
</dbReference>
<dbReference type="GO" id="GO:0004641">
    <property type="term" value="F:phosphoribosylformylglycinamidine cyclo-ligase activity"/>
    <property type="evidence" value="ECO:0007669"/>
    <property type="project" value="UniProtKB-UniRule"/>
</dbReference>
<dbReference type="GO" id="GO:0006189">
    <property type="term" value="P:'de novo' IMP biosynthetic process"/>
    <property type="evidence" value="ECO:0007669"/>
    <property type="project" value="UniProtKB-UniRule"/>
</dbReference>
<dbReference type="GO" id="GO:0046084">
    <property type="term" value="P:adenine biosynthetic process"/>
    <property type="evidence" value="ECO:0007669"/>
    <property type="project" value="TreeGrafter"/>
</dbReference>
<dbReference type="CDD" id="cd02196">
    <property type="entry name" value="PurM"/>
    <property type="match status" value="1"/>
</dbReference>
<dbReference type="FunFam" id="3.30.1330.10:FF:000020">
    <property type="entry name" value="Phosphoribosylformylglycinamidine cyclo-ligase"/>
    <property type="match status" value="1"/>
</dbReference>
<dbReference type="FunFam" id="3.90.650.10:FF:000011">
    <property type="entry name" value="Phosphoribosylformylglycinamidine cyclo-ligase"/>
    <property type="match status" value="1"/>
</dbReference>
<dbReference type="Gene3D" id="3.90.650.10">
    <property type="entry name" value="PurM-like C-terminal domain"/>
    <property type="match status" value="1"/>
</dbReference>
<dbReference type="Gene3D" id="3.30.1330.10">
    <property type="entry name" value="PurM-like, N-terminal domain"/>
    <property type="match status" value="1"/>
</dbReference>
<dbReference type="HAMAP" id="MF_00741">
    <property type="entry name" value="AIRS"/>
    <property type="match status" value="1"/>
</dbReference>
<dbReference type="InterPro" id="IPR010918">
    <property type="entry name" value="PurM-like_C_dom"/>
</dbReference>
<dbReference type="InterPro" id="IPR036676">
    <property type="entry name" value="PurM-like_C_sf"/>
</dbReference>
<dbReference type="InterPro" id="IPR016188">
    <property type="entry name" value="PurM-like_N"/>
</dbReference>
<dbReference type="InterPro" id="IPR036921">
    <property type="entry name" value="PurM-like_N_sf"/>
</dbReference>
<dbReference type="InterPro" id="IPR004733">
    <property type="entry name" value="PurM_cligase"/>
</dbReference>
<dbReference type="NCBIfam" id="TIGR00878">
    <property type="entry name" value="purM"/>
    <property type="match status" value="1"/>
</dbReference>
<dbReference type="PANTHER" id="PTHR10520:SF12">
    <property type="entry name" value="TRIFUNCTIONAL PURINE BIOSYNTHETIC PROTEIN ADENOSINE-3"/>
    <property type="match status" value="1"/>
</dbReference>
<dbReference type="PANTHER" id="PTHR10520">
    <property type="entry name" value="TRIFUNCTIONAL PURINE BIOSYNTHETIC PROTEIN ADENOSINE-3-RELATED"/>
    <property type="match status" value="1"/>
</dbReference>
<dbReference type="Pfam" id="PF00586">
    <property type="entry name" value="AIRS"/>
    <property type="match status" value="1"/>
</dbReference>
<dbReference type="Pfam" id="PF02769">
    <property type="entry name" value="AIRS_C"/>
    <property type="match status" value="1"/>
</dbReference>
<dbReference type="SUPFAM" id="SSF56042">
    <property type="entry name" value="PurM C-terminal domain-like"/>
    <property type="match status" value="1"/>
</dbReference>
<dbReference type="SUPFAM" id="SSF55326">
    <property type="entry name" value="PurM N-terminal domain-like"/>
    <property type="match status" value="1"/>
</dbReference>
<gene>
    <name evidence="1" type="primary">purM</name>
    <name type="ordered locus">Mbar_A0862</name>
</gene>
<feature type="chain" id="PRO_0000258438" description="Phosphoribosylformylglycinamidine cyclo-ligase">
    <location>
        <begin position="1"/>
        <end position="333"/>
    </location>
</feature>
<protein>
    <recommendedName>
        <fullName evidence="1">Phosphoribosylformylglycinamidine cyclo-ligase</fullName>
        <ecNumber evidence="1">6.3.3.1</ecNumber>
    </recommendedName>
    <alternativeName>
        <fullName evidence="1">AIR synthase</fullName>
    </alternativeName>
    <alternativeName>
        <fullName evidence="1">AIRS</fullName>
    </alternativeName>
    <alternativeName>
        <fullName evidence="1">Phosphoribosyl-aminoimidazole synthetase</fullName>
    </alternativeName>
</protein>
<proteinExistence type="inferred from homology"/>
<evidence type="ECO:0000255" key="1">
    <source>
        <dbReference type="HAMAP-Rule" id="MF_00741"/>
    </source>
</evidence>
<reference key="1">
    <citation type="journal article" date="2006" name="J. Bacteriol.">
        <title>The Methanosarcina barkeri genome: comparative analysis with Methanosarcina acetivorans and Methanosarcina mazei reveals extensive rearrangement within methanosarcinal genomes.</title>
        <authorList>
            <person name="Maeder D.L."/>
            <person name="Anderson I."/>
            <person name="Brettin T.S."/>
            <person name="Bruce D.C."/>
            <person name="Gilna P."/>
            <person name="Han C.S."/>
            <person name="Lapidus A."/>
            <person name="Metcalf W.W."/>
            <person name="Saunders E."/>
            <person name="Tapia R."/>
            <person name="Sowers K.R."/>
        </authorList>
    </citation>
    <scope>NUCLEOTIDE SEQUENCE [LARGE SCALE GENOMIC DNA]</scope>
    <source>
        <strain>Fusaro / DSM 804</strain>
    </source>
</reference>
<organism>
    <name type="scientific">Methanosarcina barkeri (strain Fusaro / DSM 804)</name>
    <dbReference type="NCBI Taxonomy" id="269797"/>
    <lineage>
        <taxon>Archaea</taxon>
        <taxon>Methanobacteriati</taxon>
        <taxon>Methanobacteriota</taxon>
        <taxon>Stenosarchaea group</taxon>
        <taxon>Methanomicrobia</taxon>
        <taxon>Methanosarcinales</taxon>
        <taxon>Methanosarcinaceae</taxon>
        <taxon>Methanosarcina</taxon>
    </lineage>
</organism>
<comment type="catalytic activity">
    <reaction evidence="1">
        <text>2-formamido-N(1)-(5-O-phospho-beta-D-ribosyl)acetamidine + ATP = 5-amino-1-(5-phospho-beta-D-ribosyl)imidazole + ADP + phosphate + H(+)</text>
        <dbReference type="Rhea" id="RHEA:23032"/>
        <dbReference type="ChEBI" id="CHEBI:15378"/>
        <dbReference type="ChEBI" id="CHEBI:30616"/>
        <dbReference type="ChEBI" id="CHEBI:43474"/>
        <dbReference type="ChEBI" id="CHEBI:137981"/>
        <dbReference type="ChEBI" id="CHEBI:147287"/>
        <dbReference type="ChEBI" id="CHEBI:456216"/>
        <dbReference type="EC" id="6.3.3.1"/>
    </reaction>
</comment>
<comment type="pathway">
    <text evidence="1">Purine metabolism; IMP biosynthesis via de novo pathway; 5-amino-1-(5-phospho-D-ribosyl)imidazole from N(2)-formyl-N(1)-(5-phospho-D-ribosyl)glycinamide: step 2/2.</text>
</comment>
<comment type="subcellular location">
    <subcellularLocation>
        <location evidence="1">Cytoplasm</location>
    </subcellularLocation>
</comment>
<comment type="similarity">
    <text evidence="1">Belongs to the AIR synthase family.</text>
</comment>
<keyword id="KW-0067">ATP-binding</keyword>
<keyword id="KW-0963">Cytoplasm</keyword>
<keyword id="KW-0436">Ligase</keyword>
<keyword id="KW-0547">Nucleotide-binding</keyword>
<keyword id="KW-0658">Purine biosynthesis</keyword>
<accession>Q46E56</accession>
<sequence length="333" mass="36284">MSEKHLTYADSGVDITKEEKTVKTLIEKLSYVRKGMGAPLTGIGHYAGLLDFGEYALALTTDGVGSKVLIANEMQRWNTVGIDCIAMNVNDLLAIGAEPVAFVDYLALEKHEEGFAAQIGEGLVKGAEISRMSIVGGETATLPEIIKGFDLAGTCLGIVRKDEIVEGEKVRVGDVIVGVPSTGVHSNGYTLVRKIIEESRYSYHDPCPYDNSKMIGDELLTPTRIYIEILDVLKACEVHGLAHITGSGLLKLRRVTKLGFDFYDPLEPQEIFKFLQKEGGVEDLEMYRTFNMGMGFLVILPEKDAAKAAKITGGKIVGKIVESGIRVKDLVIE</sequence>
<name>PUR5_METBF</name>